<organism>
    <name type="scientific">Homo sapiens</name>
    <name type="common">Human</name>
    <dbReference type="NCBI Taxonomy" id="9606"/>
    <lineage>
        <taxon>Eukaryota</taxon>
        <taxon>Metazoa</taxon>
        <taxon>Chordata</taxon>
        <taxon>Craniata</taxon>
        <taxon>Vertebrata</taxon>
        <taxon>Euteleostomi</taxon>
        <taxon>Mammalia</taxon>
        <taxon>Eutheria</taxon>
        <taxon>Euarchontoglires</taxon>
        <taxon>Primates</taxon>
        <taxon>Haplorrhini</taxon>
        <taxon>Catarrhini</taxon>
        <taxon>Hominidae</taxon>
        <taxon>Homo</taxon>
    </lineage>
</organism>
<keyword id="KW-1003">Cell membrane</keyword>
<keyword id="KW-1015">Disulfide bond</keyword>
<keyword id="KW-0297">G-protein coupled receptor</keyword>
<keyword id="KW-0325">Glycoprotein</keyword>
<keyword id="KW-0472">Membrane</keyword>
<keyword id="KW-0552">Olfaction</keyword>
<keyword id="KW-0675">Receptor</keyword>
<keyword id="KW-1185">Reference proteome</keyword>
<keyword id="KW-0716">Sensory transduction</keyword>
<keyword id="KW-0807">Transducer</keyword>
<keyword id="KW-0812">Transmembrane</keyword>
<keyword id="KW-1133">Transmembrane helix</keyword>
<feature type="chain" id="PRO_0000150535" description="Olfactory receptor 4C15">
    <location>
        <begin position="1"/>
        <end position="316"/>
    </location>
</feature>
<feature type="topological domain" description="Extracellular" evidence="1">
    <location>
        <begin position="1"/>
        <end position="23"/>
    </location>
</feature>
<feature type="transmembrane region" description="Helical; Name=1" evidence="1">
    <location>
        <begin position="24"/>
        <end position="47"/>
    </location>
</feature>
<feature type="topological domain" description="Cytoplasmic" evidence="1">
    <location>
        <begin position="48"/>
        <end position="56"/>
    </location>
</feature>
<feature type="transmembrane region" description="Helical; Name=2" evidence="1">
    <location>
        <begin position="57"/>
        <end position="78"/>
    </location>
</feature>
<feature type="topological domain" description="Extracellular" evidence="1">
    <location>
        <begin position="79"/>
        <end position="99"/>
    </location>
</feature>
<feature type="transmembrane region" description="Helical; Name=3" evidence="1">
    <location>
        <begin position="100"/>
        <end position="119"/>
    </location>
</feature>
<feature type="topological domain" description="Cytoplasmic" evidence="1">
    <location>
        <begin position="120"/>
        <end position="138"/>
    </location>
</feature>
<feature type="transmembrane region" description="Helical; Name=4" evidence="1">
    <location>
        <begin position="139"/>
        <end position="157"/>
    </location>
</feature>
<feature type="topological domain" description="Extracellular" evidence="1">
    <location>
        <begin position="158"/>
        <end position="194"/>
    </location>
</feature>
<feature type="transmembrane region" description="Helical; Name=5" evidence="1">
    <location>
        <begin position="195"/>
        <end position="217"/>
    </location>
</feature>
<feature type="topological domain" description="Cytoplasmic" evidence="1">
    <location>
        <begin position="218"/>
        <end position="234"/>
    </location>
</feature>
<feature type="transmembrane region" description="Helical; Name=6" evidence="1">
    <location>
        <begin position="235"/>
        <end position="257"/>
    </location>
</feature>
<feature type="topological domain" description="Extracellular" evidence="1">
    <location>
        <begin position="258"/>
        <end position="268"/>
    </location>
</feature>
<feature type="transmembrane region" description="Helical; Name=7" evidence="1">
    <location>
        <begin position="269"/>
        <end position="288"/>
    </location>
</feature>
<feature type="topological domain" description="Cytoplasmic" evidence="1">
    <location>
        <begin position="289"/>
        <end position="316"/>
    </location>
</feature>
<feature type="glycosylation site" description="N-linked (GlcNAc...) asparagine" evidence="1">
    <location>
        <position position="3"/>
    </location>
</feature>
<feature type="disulfide bond" evidence="2">
    <location>
        <begin position="96"/>
        <end position="188"/>
    </location>
</feature>
<comment type="function">
    <text evidence="3">Odorant receptor.</text>
</comment>
<comment type="subcellular location">
    <subcellularLocation>
        <location>Cell membrane</location>
        <topology>Multi-pass membrane protein</topology>
    </subcellularLocation>
</comment>
<comment type="similarity">
    <text evidence="2">Belongs to the G-protein coupled receptor 1 family.</text>
</comment>
<comment type="sequence caution" evidence="3">
    <conflict type="erroneous initiation">
        <sequence resource="EMBL-CDS" id="DAA04717"/>
    </conflict>
</comment>
<comment type="sequence caution" evidence="3">
    <conflict type="erroneous initiation">
        <sequence resource="EMBL-CDS" id="DAA04718"/>
    </conflict>
</comment>
<comment type="online information" name="Human Olfactory Receptor Data Exploratorium (HORDE)">
    <link uri="http://genome.weizmann.ac.il/horde/card/index/symbol:OR4C15"/>
</comment>
<dbReference type="EMBL" id="AB065771">
    <property type="protein sequence ID" value="BAC05991.1"/>
    <property type="molecule type" value="Genomic_DNA"/>
</dbReference>
<dbReference type="EMBL" id="AP001998">
    <property type="status" value="NOT_ANNOTATED_CDS"/>
    <property type="molecule type" value="Genomic_DNA"/>
</dbReference>
<dbReference type="EMBL" id="BK004319">
    <property type="protein sequence ID" value="DAA04717.1"/>
    <property type="status" value="ALT_INIT"/>
    <property type="molecule type" value="Genomic_DNA"/>
</dbReference>
<dbReference type="EMBL" id="BK004320">
    <property type="protein sequence ID" value="DAA04718.1"/>
    <property type="status" value="ALT_INIT"/>
    <property type="molecule type" value="Genomic_DNA"/>
</dbReference>
<dbReference type="CCDS" id="CCDS31501.2"/>
<dbReference type="RefSeq" id="NP_001001920.2">
    <property type="nucleotide sequence ID" value="NM_001001920.3"/>
</dbReference>
<dbReference type="SMR" id="Q8NGM1"/>
<dbReference type="BioGRID" id="123440">
    <property type="interactions" value="1"/>
</dbReference>
<dbReference type="FunCoup" id="Q8NGM1">
    <property type="interactions" value="416"/>
</dbReference>
<dbReference type="STRING" id="9606.ENSP00000324958"/>
<dbReference type="GlyCosmos" id="Q8NGM1">
    <property type="glycosylation" value="1 site, No reported glycans"/>
</dbReference>
<dbReference type="GlyGen" id="Q8NGM1">
    <property type="glycosylation" value="1 site"/>
</dbReference>
<dbReference type="iPTMnet" id="Q8NGM1"/>
<dbReference type="PhosphoSitePlus" id="Q8NGM1"/>
<dbReference type="BioMuta" id="OR4C15"/>
<dbReference type="DMDM" id="38372727"/>
<dbReference type="PaxDb" id="9606-ENSP00000324958"/>
<dbReference type="PeptideAtlas" id="Q8NGM1"/>
<dbReference type="Antibodypedia" id="27128">
    <property type="antibodies" value="58 antibodies from 17 providers"/>
</dbReference>
<dbReference type="DNASU" id="81309"/>
<dbReference type="Ensembl" id="ENST00000642128.1">
    <property type="protein sequence ID" value="ENSP00000493126.1"/>
    <property type="gene ID" value="ENSG00000181939.3"/>
</dbReference>
<dbReference type="GeneID" id="81309"/>
<dbReference type="KEGG" id="hsa:81309"/>
<dbReference type="MANE-Select" id="ENST00000642128.1">
    <property type="protein sequence ID" value="ENSP00000493126.1"/>
    <property type="RefSeq nucleotide sequence ID" value="NM_001001920.3"/>
    <property type="RefSeq protein sequence ID" value="NP_001001920.2"/>
</dbReference>
<dbReference type="UCSC" id="uc010rig.2">
    <property type="organism name" value="human"/>
</dbReference>
<dbReference type="AGR" id="HGNC:15171"/>
<dbReference type="CTD" id="81309"/>
<dbReference type="GeneCards" id="OR4C15"/>
<dbReference type="HGNC" id="HGNC:15171">
    <property type="gene designation" value="OR4C15"/>
</dbReference>
<dbReference type="HPA" id="ENSG00000181939">
    <property type="expression patterns" value="Not detected"/>
</dbReference>
<dbReference type="neXtProt" id="NX_Q8NGM1"/>
<dbReference type="OpenTargets" id="ENSG00000181939"/>
<dbReference type="VEuPathDB" id="HostDB:ENSG00000181939"/>
<dbReference type="eggNOG" id="ENOG502SIY5">
    <property type="taxonomic scope" value="Eukaryota"/>
</dbReference>
<dbReference type="GeneTree" id="ENSGT00900000141017"/>
<dbReference type="HOGENOM" id="CLU_012526_5_5_1"/>
<dbReference type="InParanoid" id="Q8NGM1"/>
<dbReference type="OMA" id="RLCSILM"/>
<dbReference type="OrthoDB" id="10017003at2759"/>
<dbReference type="PAN-GO" id="Q8NGM1">
    <property type="GO annotations" value="2 GO annotations based on evolutionary models"/>
</dbReference>
<dbReference type="PhylomeDB" id="Q8NGM1"/>
<dbReference type="TreeFam" id="TF352732"/>
<dbReference type="PathwayCommons" id="Q8NGM1"/>
<dbReference type="Reactome" id="R-HSA-9752946">
    <property type="pathway name" value="Expression and translocation of olfactory receptors"/>
</dbReference>
<dbReference type="BioGRID-ORCS" id="81309">
    <property type="hits" value="4 hits in 731 CRISPR screens"/>
</dbReference>
<dbReference type="GeneWiki" id="OR4C15"/>
<dbReference type="GenomeRNAi" id="81309"/>
<dbReference type="Pharos" id="Q8NGM1">
    <property type="development level" value="Tdark"/>
</dbReference>
<dbReference type="PRO" id="PR:Q8NGM1"/>
<dbReference type="Proteomes" id="UP000005640">
    <property type="component" value="Chromosome 11"/>
</dbReference>
<dbReference type="RNAct" id="Q8NGM1">
    <property type="molecule type" value="protein"/>
</dbReference>
<dbReference type="Bgee" id="ENSG00000181939">
    <property type="expression patterns" value="Expressed in primordial germ cell in gonad"/>
</dbReference>
<dbReference type="ExpressionAtlas" id="Q8NGM1">
    <property type="expression patterns" value="baseline and differential"/>
</dbReference>
<dbReference type="GO" id="GO:0005886">
    <property type="term" value="C:plasma membrane"/>
    <property type="evidence" value="ECO:0000318"/>
    <property type="project" value="GO_Central"/>
</dbReference>
<dbReference type="GO" id="GO:0004930">
    <property type="term" value="F:G protein-coupled receptor activity"/>
    <property type="evidence" value="ECO:0007669"/>
    <property type="project" value="UniProtKB-KW"/>
</dbReference>
<dbReference type="GO" id="GO:0004984">
    <property type="term" value="F:olfactory receptor activity"/>
    <property type="evidence" value="ECO:0000318"/>
    <property type="project" value="GO_Central"/>
</dbReference>
<dbReference type="CDD" id="cd15939">
    <property type="entry name" value="7tmA_OR4A-like"/>
    <property type="match status" value="1"/>
</dbReference>
<dbReference type="FunFam" id="1.10.1220.70:FF:000001">
    <property type="entry name" value="Olfactory receptor"/>
    <property type="match status" value="1"/>
</dbReference>
<dbReference type="FunFam" id="1.20.1070.10:FF:000007">
    <property type="entry name" value="Olfactory receptor"/>
    <property type="match status" value="1"/>
</dbReference>
<dbReference type="Gene3D" id="1.20.1070.10">
    <property type="entry name" value="Rhodopsin 7-helix transmembrane proteins"/>
    <property type="match status" value="1"/>
</dbReference>
<dbReference type="InterPro" id="IPR000276">
    <property type="entry name" value="GPCR_Rhodpsn"/>
</dbReference>
<dbReference type="InterPro" id="IPR017452">
    <property type="entry name" value="GPCR_Rhodpsn_7TM"/>
</dbReference>
<dbReference type="InterPro" id="IPR000725">
    <property type="entry name" value="Olfact_rcpt"/>
</dbReference>
<dbReference type="InterPro" id="IPR050427">
    <property type="entry name" value="Olfactory_Receptors"/>
</dbReference>
<dbReference type="PANTHER" id="PTHR48002">
    <property type="entry name" value="OLFACTORY RECEPTOR"/>
    <property type="match status" value="1"/>
</dbReference>
<dbReference type="Pfam" id="PF13853">
    <property type="entry name" value="7tm_4"/>
    <property type="match status" value="1"/>
</dbReference>
<dbReference type="PRINTS" id="PR00237">
    <property type="entry name" value="GPCRRHODOPSN"/>
</dbReference>
<dbReference type="PRINTS" id="PR00245">
    <property type="entry name" value="OLFACTORYR"/>
</dbReference>
<dbReference type="SUPFAM" id="SSF81321">
    <property type="entry name" value="Family A G protein-coupled receptor-like"/>
    <property type="match status" value="1"/>
</dbReference>
<dbReference type="PROSITE" id="PS00237">
    <property type="entry name" value="G_PROTEIN_RECEP_F1_1"/>
    <property type="match status" value="1"/>
</dbReference>
<dbReference type="PROSITE" id="PS50262">
    <property type="entry name" value="G_PROTEIN_RECEP_F1_2"/>
    <property type="match status" value="1"/>
</dbReference>
<name>OR4CF_HUMAN</name>
<evidence type="ECO:0000255" key="1"/>
<evidence type="ECO:0000255" key="2">
    <source>
        <dbReference type="PROSITE-ProRule" id="PRU00521"/>
    </source>
</evidence>
<evidence type="ECO:0000305" key="3"/>
<reference key="1">
    <citation type="submission" date="2001-07" db="EMBL/GenBank/DDBJ databases">
        <title>Genome-wide discovery and analysis of human seven transmembrane helix receptor genes.</title>
        <authorList>
            <person name="Suwa M."/>
            <person name="Sato T."/>
            <person name="Okouchi I."/>
            <person name="Arita M."/>
            <person name="Futami K."/>
            <person name="Matsumoto S."/>
            <person name="Tsutsumi S."/>
            <person name="Aburatani H."/>
            <person name="Asai K."/>
            <person name="Akiyama Y."/>
        </authorList>
    </citation>
    <scope>NUCLEOTIDE SEQUENCE [GENOMIC DNA]</scope>
</reference>
<reference key="2">
    <citation type="journal article" date="2006" name="Nature">
        <title>Human chromosome 11 DNA sequence and analysis including novel gene identification.</title>
        <authorList>
            <person name="Taylor T.D."/>
            <person name="Noguchi H."/>
            <person name="Totoki Y."/>
            <person name="Toyoda A."/>
            <person name="Kuroki Y."/>
            <person name="Dewar K."/>
            <person name="Lloyd C."/>
            <person name="Itoh T."/>
            <person name="Takeda T."/>
            <person name="Kim D.-W."/>
            <person name="She X."/>
            <person name="Barlow K.F."/>
            <person name="Bloom T."/>
            <person name="Bruford E."/>
            <person name="Chang J.L."/>
            <person name="Cuomo C.A."/>
            <person name="Eichler E."/>
            <person name="FitzGerald M.G."/>
            <person name="Jaffe D.B."/>
            <person name="LaButti K."/>
            <person name="Nicol R."/>
            <person name="Park H.-S."/>
            <person name="Seaman C."/>
            <person name="Sougnez C."/>
            <person name="Yang X."/>
            <person name="Zimmer A.R."/>
            <person name="Zody M.C."/>
            <person name="Birren B.W."/>
            <person name="Nusbaum C."/>
            <person name="Fujiyama A."/>
            <person name="Hattori M."/>
            <person name="Rogers J."/>
            <person name="Lander E.S."/>
            <person name="Sakaki Y."/>
        </authorList>
    </citation>
    <scope>NUCLEOTIDE SEQUENCE [LARGE SCALE GENOMIC DNA]</scope>
</reference>
<reference key="3">
    <citation type="journal article" date="2004" name="Proc. Natl. Acad. Sci. U.S.A.">
        <title>The human olfactory receptor gene family.</title>
        <authorList>
            <person name="Malnic B."/>
            <person name="Godfrey P.A."/>
            <person name="Buck L.B."/>
        </authorList>
    </citation>
    <scope>IDENTIFICATION</scope>
</reference>
<reference key="4">
    <citation type="journal article" date="2004" name="Proc. Natl. Acad. Sci. U.S.A.">
        <authorList>
            <person name="Malnic B."/>
            <person name="Godfrey P.A."/>
            <person name="Buck L.B."/>
        </authorList>
    </citation>
    <scope>ERRATUM OF PUBMED:14983052</scope>
</reference>
<gene>
    <name type="primary">OR4C15</name>
</gene>
<accession>Q8NGM1</accession>
<accession>Q6IFE2</accession>
<protein>
    <recommendedName>
        <fullName>Olfactory receptor 4C15</fullName>
    </recommendedName>
    <alternativeName>
        <fullName>Olfactory receptor OR11-127</fullName>
    </alternativeName>
    <alternativeName>
        <fullName>Olfactory receptor OR11-134</fullName>
    </alternativeName>
</protein>
<sequence length="316" mass="35667">MQNQSFVTEFVLLGLSQNPNVQEIVFVVFLFVYIATVGGNMLIVVTILSSPALLVSPMYFFLGFLSFLDACFSSVITPKMIVDSLYVTKTISFEGCMMQLFAEHFFAGVEVIVLTAMAYDRYVAICKPLHYSSIMNRRLCGILMGVAWTGGLLHSMIQILFTFQLPFCGPNVINHFMCDLYPLLELACTDTHIFGLMVVINSGFICIINFSLLLVSYAVILLSLRTHSSEGRWKALSTCGSHIAVVILFFVPCIFVYTRPPSAFSLDKMAAIFYIILNPLLNPLIYTFRNKEVKQAMRRIWNRLMVVSDEKENIKL</sequence>
<proteinExistence type="inferred from homology"/>